<gene>
    <name evidence="1" type="primary">pyrF</name>
    <name type="ordered locus">MGAS2096_Spy0775</name>
</gene>
<keyword id="KW-0210">Decarboxylase</keyword>
<keyword id="KW-0456">Lyase</keyword>
<keyword id="KW-0665">Pyrimidine biosynthesis</keyword>
<dbReference type="EC" id="4.1.1.23" evidence="1"/>
<dbReference type="EMBL" id="CP000261">
    <property type="protein sequence ID" value="ABF35827.1"/>
    <property type="molecule type" value="Genomic_DNA"/>
</dbReference>
<dbReference type="SMR" id="Q1JC81"/>
<dbReference type="KEGG" id="spj:MGAS2096_Spy0775"/>
<dbReference type="HOGENOM" id="CLU_067069_1_1_9"/>
<dbReference type="UniPathway" id="UPA00070">
    <property type="reaction ID" value="UER00120"/>
</dbReference>
<dbReference type="GO" id="GO:0005829">
    <property type="term" value="C:cytosol"/>
    <property type="evidence" value="ECO:0007669"/>
    <property type="project" value="TreeGrafter"/>
</dbReference>
<dbReference type="GO" id="GO:0004590">
    <property type="term" value="F:orotidine-5'-phosphate decarboxylase activity"/>
    <property type="evidence" value="ECO:0007669"/>
    <property type="project" value="UniProtKB-UniRule"/>
</dbReference>
<dbReference type="GO" id="GO:0006207">
    <property type="term" value="P:'de novo' pyrimidine nucleobase biosynthetic process"/>
    <property type="evidence" value="ECO:0007669"/>
    <property type="project" value="InterPro"/>
</dbReference>
<dbReference type="GO" id="GO:0044205">
    <property type="term" value="P:'de novo' UMP biosynthetic process"/>
    <property type="evidence" value="ECO:0007669"/>
    <property type="project" value="UniProtKB-UniRule"/>
</dbReference>
<dbReference type="CDD" id="cd04725">
    <property type="entry name" value="OMP_decarboxylase_like"/>
    <property type="match status" value="1"/>
</dbReference>
<dbReference type="FunFam" id="3.20.20.70:FF:000015">
    <property type="entry name" value="Orotidine 5'-phosphate decarboxylase"/>
    <property type="match status" value="1"/>
</dbReference>
<dbReference type="Gene3D" id="3.20.20.70">
    <property type="entry name" value="Aldolase class I"/>
    <property type="match status" value="1"/>
</dbReference>
<dbReference type="HAMAP" id="MF_01200_B">
    <property type="entry name" value="OMPdecase_type1_B"/>
    <property type="match status" value="1"/>
</dbReference>
<dbReference type="InterPro" id="IPR013785">
    <property type="entry name" value="Aldolase_TIM"/>
</dbReference>
<dbReference type="InterPro" id="IPR014732">
    <property type="entry name" value="OMPdecase"/>
</dbReference>
<dbReference type="InterPro" id="IPR018089">
    <property type="entry name" value="OMPdecase_AS"/>
</dbReference>
<dbReference type="InterPro" id="IPR047596">
    <property type="entry name" value="OMPdecase_bac"/>
</dbReference>
<dbReference type="InterPro" id="IPR001754">
    <property type="entry name" value="OMPdeCOase_dom"/>
</dbReference>
<dbReference type="InterPro" id="IPR011060">
    <property type="entry name" value="RibuloseP-bd_barrel"/>
</dbReference>
<dbReference type="NCBIfam" id="NF001273">
    <property type="entry name" value="PRK00230.1"/>
    <property type="match status" value="1"/>
</dbReference>
<dbReference type="NCBIfam" id="TIGR01740">
    <property type="entry name" value="pyrF"/>
    <property type="match status" value="1"/>
</dbReference>
<dbReference type="PANTHER" id="PTHR32119">
    <property type="entry name" value="OROTIDINE 5'-PHOSPHATE DECARBOXYLASE"/>
    <property type="match status" value="1"/>
</dbReference>
<dbReference type="PANTHER" id="PTHR32119:SF2">
    <property type="entry name" value="OROTIDINE 5'-PHOSPHATE DECARBOXYLASE"/>
    <property type="match status" value="1"/>
</dbReference>
<dbReference type="Pfam" id="PF00215">
    <property type="entry name" value="OMPdecase"/>
    <property type="match status" value="1"/>
</dbReference>
<dbReference type="SMART" id="SM00934">
    <property type="entry name" value="OMPdecase"/>
    <property type="match status" value="1"/>
</dbReference>
<dbReference type="SUPFAM" id="SSF51366">
    <property type="entry name" value="Ribulose-phoshate binding barrel"/>
    <property type="match status" value="1"/>
</dbReference>
<dbReference type="PROSITE" id="PS00156">
    <property type="entry name" value="OMPDECASE"/>
    <property type="match status" value="1"/>
</dbReference>
<protein>
    <recommendedName>
        <fullName evidence="1">Orotidine 5'-phosphate decarboxylase</fullName>
        <ecNumber evidence="1">4.1.1.23</ecNumber>
    </recommendedName>
    <alternativeName>
        <fullName evidence="1">OMP decarboxylase</fullName>
        <shortName evidence="1">OMPDCase</shortName>
        <shortName evidence="1">OMPdecase</shortName>
    </alternativeName>
</protein>
<evidence type="ECO:0000255" key="1">
    <source>
        <dbReference type="HAMAP-Rule" id="MF_01200"/>
    </source>
</evidence>
<feature type="chain" id="PRO_1000065946" description="Orotidine 5'-phosphate decarboxylase">
    <location>
        <begin position="1"/>
        <end position="230"/>
    </location>
</feature>
<feature type="active site" description="Proton donor" evidence="1">
    <location>
        <position position="63"/>
    </location>
</feature>
<feature type="binding site" evidence="1">
    <location>
        <position position="11"/>
    </location>
    <ligand>
        <name>substrate</name>
    </ligand>
</feature>
<feature type="binding site" evidence="1">
    <location>
        <position position="34"/>
    </location>
    <ligand>
        <name>substrate</name>
    </ligand>
</feature>
<feature type="binding site" evidence="1">
    <location>
        <begin position="61"/>
        <end position="70"/>
    </location>
    <ligand>
        <name>substrate</name>
    </ligand>
</feature>
<feature type="binding site" evidence="1">
    <location>
        <position position="117"/>
    </location>
    <ligand>
        <name>substrate</name>
    </ligand>
</feature>
<feature type="binding site" evidence="1">
    <location>
        <position position="179"/>
    </location>
    <ligand>
        <name>substrate</name>
    </ligand>
</feature>
<feature type="binding site" evidence="1">
    <location>
        <position position="188"/>
    </location>
    <ligand>
        <name>substrate</name>
    </ligand>
</feature>
<feature type="binding site" evidence="1">
    <location>
        <position position="208"/>
    </location>
    <ligand>
        <name>substrate</name>
    </ligand>
</feature>
<feature type="binding site" evidence="1">
    <location>
        <position position="209"/>
    </location>
    <ligand>
        <name>substrate</name>
    </ligand>
</feature>
<comment type="function">
    <text evidence="1">Catalyzes the decarboxylation of orotidine 5'-monophosphate (OMP) to uridine 5'-monophosphate (UMP).</text>
</comment>
<comment type="catalytic activity">
    <reaction evidence="1">
        <text>orotidine 5'-phosphate + H(+) = UMP + CO2</text>
        <dbReference type="Rhea" id="RHEA:11596"/>
        <dbReference type="ChEBI" id="CHEBI:15378"/>
        <dbReference type="ChEBI" id="CHEBI:16526"/>
        <dbReference type="ChEBI" id="CHEBI:57538"/>
        <dbReference type="ChEBI" id="CHEBI:57865"/>
        <dbReference type="EC" id="4.1.1.23"/>
    </reaction>
</comment>
<comment type="pathway">
    <text evidence="1">Pyrimidine metabolism; UMP biosynthesis via de novo pathway; UMP from orotate: step 2/2.</text>
</comment>
<comment type="subunit">
    <text evidence="1">Homodimer.</text>
</comment>
<comment type="similarity">
    <text evidence="1">Belongs to the OMP decarboxylase family. Type 1 subfamily.</text>
</comment>
<sequence length="230" mass="24928">MKEERPIIALDFSSFEETKAFLDLFPAEEKLYVKIGMELYYAQGPDIVRSIKSLGHNVFLDLKLHDIPNTVRAAMAVLKELDIDMATVHAAGGVEMLKAAREGLGQGPTLIAVTQLTSTSEDQMRGDQNIQTSLLESVLHYSKGAAKAQLDGVVCSAQEVEAIKAVTPTGFTCLTPGIRPKGSNIGDQKRVMTPNQARRIGSDYIVVGRPITQAKDPVAAYQAIKAEWAG</sequence>
<organism>
    <name type="scientific">Streptococcus pyogenes serotype M12 (strain MGAS2096)</name>
    <dbReference type="NCBI Taxonomy" id="370553"/>
    <lineage>
        <taxon>Bacteria</taxon>
        <taxon>Bacillati</taxon>
        <taxon>Bacillota</taxon>
        <taxon>Bacilli</taxon>
        <taxon>Lactobacillales</taxon>
        <taxon>Streptococcaceae</taxon>
        <taxon>Streptococcus</taxon>
    </lineage>
</organism>
<reference key="1">
    <citation type="journal article" date="2006" name="Proc. Natl. Acad. Sci. U.S.A.">
        <title>Molecular genetic anatomy of inter- and intraserotype variation in the human bacterial pathogen group A Streptococcus.</title>
        <authorList>
            <person name="Beres S.B."/>
            <person name="Richter E.W."/>
            <person name="Nagiec M.J."/>
            <person name="Sumby P."/>
            <person name="Porcella S.F."/>
            <person name="DeLeo F.R."/>
            <person name="Musser J.M."/>
        </authorList>
    </citation>
    <scope>NUCLEOTIDE SEQUENCE [LARGE SCALE GENOMIC DNA]</scope>
    <source>
        <strain>MGAS2096</strain>
    </source>
</reference>
<proteinExistence type="inferred from homology"/>
<name>PYRF_STRPB</name>
<accession>Q1JC81</accession>